<keyword id="KW-0963">Cytoplasm</keyword>
<keyword id="KW-0378">Hydrolase</keyword>
<keyword id="KW-0540">Nuclease</keyword>
<keyword id="KW-0690">Ribosome biogenesis</keyword>
<feature type="chain" id="PRO_1000061522" description="Putative pre-16S rRNA nuclease">
    <location>
        <begin position="1"/>
        <end position="139"/>
    </location>
</feature>
<dbReference type="EC" id="3.1.-.-" evidence="1"/>
<dbReference type="EMBL" id="CP000671">
    <property type="protein sequence ID" value="ABQ97785.1"/>
    <property type="molecule type" value="Genomic_DNA"/>
</dbReference>
<dbReference type="SMR" id="A5UAI4"/>
<dbReference type="KEGG" id="hip:CGSHiEE_01525"/>
<dbReference type="HOGENOM" id="CLU_098240_3_0_6"/>
<dbReference type="GO" id="GO:0005829">
    <property type="term" value="C:cytosol"/>
    <property type="evidence" value="ECO:0007669"/>
    <property type="project" value="TreeGrafter"/>
</dbReference>
<dbReference type="GO" id="GO:0004518">
    <property type="term" value="F:nuclease activity"/>
    <property type="evidence" value="ECO:0007669"/>
    <property type="project" value="UniProtKB-KW"/>
</dbReference>
<dbReference type="GO" id="GO:0000967">
    <property type="term" value="P:rRNA 5'-end processing"/>
    <property type="evidence" value="ECO:0007669"/>
    <property type="project" value="UniProtKB-UniRule"/>
</dbReference>
<dbReference type="CDD" id="cd16964">
    <property type="entry name" value="YqgF"/>
    <property type="match status" value="1"/>
</dbReference>
<dbReference type="FunFam" id="3.30.420.140:FF:000002">
    <property type="entry name" value="Putative pre-16S rRNA nuclease"/>
    <property type="match status" value="1"/>
</dbReference>
<dbReference type="Gene3D" id="3.30.420.140">
    <property type="entry name" value="YqgF/RNase H-like domain"/>
    <property type="match status" value="1"/>
</dbReference>
<dbReference type="HAMAP" id="MF_00651">
    <property type="entry name" value="Nuclease_YqgF"/>
    <property type="match status" value="1"/>
</dbReference>
<dbReference type="InterPro" id="IPR012337">
    <property type="entry name" value="RNaseH-like_sf"/>
</dbReference>
<dbReference type="InterPro" id="IPR005227">
    <property type="entry name" value="YqgF"/>
</dbReference>
<dbReference type="InterPro" id="IPR006641">
    <property type="entry name" value="YqgF/RNaseH-like_dom"/>
</dbReference>
<dbReference type="InterPro" id="IPR037027">
    <property type="entry name" value="YqgF/RNaseH-like_dom_sf"/>
</dbReference>
<dbReference type="NCBIfam" id="TIGR00250">
    <property type="entry name" value="RNAse_H_YqgF"/>
    <property type="match status" value="1"/>
</dbReference>
<dbReference type="PANTHER" id="PTHR33317">
    <property type="entry name" value="POLYNUCLEOTIDYL TRANSFERASE, RIBONUCLEASE H-LIKE SUPERFAMILY PROTEIN"/>
    <property type="match status" value="1"/>
</dbReference>
<dbReference type="PANTHER" id="PTHR33317:SF4">
    <property type="entry name" value="POLYNUCLEOTIDYL TRANSFERASE, RIBONUCLEASE H-LIKE SUPERFAMILY PROTEIN"/>
    <property type="match status" value="1"/>
</dbReference>
<dbReference type="Pfam" id="PF03652">
    <property type="entry name" value="RuvX"/>
    <property type="match status" value="1"/>
</dbReference>
<dbReference type="SMART" id="SM00732">
    <property type="entry name" value="YqgFc"/>
    <property type="match status" value="1"/>
</dbReference>
<dbReference type="SUPFAM" id="SSF53098">
    <property type="entry name" value="Ribonuclease H-like"/>
    <property type="match status" value="1"/>
</dbReference>
<reference key="1">
    <citation type="journal article" date="2007" name="Genome Biol.">
        <title>Characterization and modeling of the Haemophilus influenzae core and supragenomes based on the complete genomic sequences of Rd and 12 clinical nontypeable strains.</title>
        <authorList>
            <person name="Hogg J.S."/>
            <person name="Hu F.Z."/>
            <person name="Janto B."/>
            <person name="Boissy R."/>
            <person name="Hayes J."/>
            <person name="Keefe R."/>
            <person name="Post J.C."/>
            <person name="Ehrlich G.D."/>
        </authorList>
    </citation>
    <scope>NUCLEOTIDE SEQUENCE [LARGE SCALE GENOMIC DNA]</scope>
    <source>
        <strain>PittEE</strain>
    </source>
</reference>
<comment type="function">
    <text evidence="1">Could be a nuclease involved in processing of the 5'-end of pre-16S rRNA.</text>
</comment>
<comment type="subcellular location">
    <subcellularLocation>
        <location evidence="1">Cytoplasm</location>
    </subcellularLocation>
</comment>
<comment type="similarity">
    <text evidence="1">Belongs to the YqgF nuclease family.</text>
</comment>
<gene>
    <name type="ordered locus">CGSHiEE_01525</name>
</gene>
<organism>
    <name type="scientific">Haemophilus influenzae (strain PittEE)</name>
    <dbReference type="NCBI Taxonomy" id="374930"/>
    <lineage>
        <taxon>Bacteria</taxon>
        <taxon>Pseudomonadati</taxon>
        <taxon>Pseudomonadota</taxon>
        <taxon>Gammaproteobacteria</taxon>
        <taxon>Pasteurellales</taxon>
        <taxon>Pasteurellaceae</taxon>
        <taxon>Haemophilus</taxon>
    </lineage>
</organism>
<name>YQGF_HAEIE</name>
<protein>
    <recommendedName>
        <fullName evidence="1">Putative pre-16S rRNA nuclease</fullName>
        <ecNumber evidence="1">3.1.-.-</ecNumber>
    </recommendedName>
</protein>
<proteinExistence type="inferred from homology"/>
<evidence type="ECO:0000255" key="1">
    <source>
        <dbReference type="HAMAP-Rule" id="MF_00651"/>
    </source>
</evidence>
<accession>A5UAI4</accession>
<sequence length="139" mass="15266">MGITALAFDFGTKSIGCAIGQSITGTAQALPAFKAQDGIPNWEAIEKCLKEWKPDVVIVGLPLNMDGTEQNLTLLARKFANRLQGRFGVNVHLQDERLTTTQARSEIFERGGFKALKKGKVDGISACLILESWFECTEY</sequence>